<organism>
    <name type="scientific">Lactococcus lactis subsp. cremoris (strain SK11)</name>
    <dbReference type="NCBI Taxonomy" id="272622"/>
    <lineage>
        <taxon>Bacteria</taxon>
        <taxon>Bacillati</taxon>
        <taxon>Bacillota</taxon>
        <taxon>Bacilli</taxon>
        <taxon>Lactobacillales</taxon>
        <taxon>Streptococcaceae</taxon>
        <taxon>Lactococcus</taxon>
        <taxon>Lactococcus cremoris subsp. cremoris</taxon>
    </lineage>
</organism>
<gene>
    <name evidence="1" type="primary">folD</name>
    <name type="ordered locus">LACR_0921</name>
</gene>
<sequence>MNLIDGKALAAKMQAELKVKVDKLKEAGSVPGLAVILVGEDPASQIYVRNKARQATAIGLNSSVVRLPETVSEKELLELIEQYNQSEQWHGILVQLPLPKHISEEKVLLAIDPEKDVDGFHPMNMGRLWAGNPLMIPSTPAGIMEMFREYNVELSGKRAVVIGRSNIVGKPMAQLLMMADATVTIAHSRTKNLRELTKEADILVVAIGRDRMIKADDVKDGAVVIDVGMNRDEDGKLHGDVDFDEVKEVASLITPVPGGVGPMTITMLMEQTVRAATRKMNENSN</sequence>
<evidence type="ECO:0000255" key="1">
    <source>
        <dbReference type="HAMAP-Rule" id="MF_01576"/>
    </source>
</evidence>
<evidence type="ECO:0000305" key="2"/>
<reference key="1">
    <citation type="journal article" date="2006" name="Proc. Natl. Acad. Sci. U.S.A.">
        <title>Comparative genomics of the lactic acid bacteria.</title>
        <authorList>
            <person name="Makarova K.S."/>
            <person name="Slesarev A."/>
            <person name="Wolf Y.I."/>
            <person name="Sorokin A."/>
            <person name="Mirkin B."/>
            <person name="Koonin E.V."/>
            <person name="Pavlov A."/>
            <person name="Pavlova N."/>
            <person name="Karamychev V."/>
            <person name="Polouchine N."/>
            <person name="Shakhova V."/>
            <person name="Grigoriev I."/>
            <person name="Lou Y."/>
            <person name="Rohksar D."/>
            <person name="Lucas S."/>
            <person name="Huang K."/>
            <person name="Goodstein D.M."/>
            <person name="Hawkins T."/>
            <person name="Plengvidhya V."/>
            <person name="Welker D."/>
            <person name="Hughes J."/>
            <person name="Goh Y."/>
            <person name="Benson A."/>
            <person name="Baldwin K."/>
            <person name="Lee J.-H."/>
            <person name="Diaz-Muniz I."/>
            <person name="Dosti B."/>
            <person name="Smeianov V."/>
            <person name="Wechter W."/>
            <person name="Barabote R."/>
            <person name="Lorca G."/>
            <person name="Altermann E."/>
            <person name="Barrangou R."/>
            <person name="Ganesan B."/>
            <person name="Xie Y."/>
            <person name="Rawsthorne H."/>
            <person name="Tamir D."/>
            <person name="Parker C."/>
            <person name="Breidt F."/>
            <person name="Broadbent J.R."/>
            <person name="Hutkins R."/>
            <person name="O'Sullivan D."/>
            <person name="Steele J."/>
            <person name="Unlu G."/>
            <person name="Saier M.H. Jr."/>
            <person name="Klaenhammer T."/>
            <person name="Richardson P."/>
            <person name="Kozyavkin S."/>
            <person name="Weimer B.C."/>
            <person name="Mills D.A."/>
        </authorList>
    </citation>
    <scope>NUCLEOTIDE SEQUENCE [LARGE SCALE GENOMIC DNA]</scope>
    <source>
        <strain>SK11</strain>
    </source>
</reference>
<dbReference type="EC" id="1.5.1.5" evidence="1"/>
<dbReference type="EC" id="3.5.4.9" evidence="1"/>
<dbReference type="EMBL" id="CP000425">
    <property type="protein sequence ID" value="ABJ72469.1"/>
    <property type="status" value="ALT_INIT"/>
    <property type="molecule type" value="Genomic_DNA"/>
</dbReference>
<dbReference type="RefSeq" id="WP_011835499.1">
    <property type="nucleotide sequence ID" value="NC_008527.1"/>
</dbReference>
<dbReference type="SMR" id="Q030A3"/>
<dbReference type="KEGG" id="llc:LACR_0921"/>
<dbReference type="HOGENOM" id="CLU_034045_2_1_9"/>
<dbReference type="UniPathway" id="UPA00193"/>
<dbReference type="Proteomes" id="UP000000240">
    <property type="component" value="Chromosome"/>
</dbReference>
<dbReference type="GO" id="GO:0005829">
    <property type="term" value="C:cytosol"/>
    <property type="evidence" value="ECO:0007669"/>
    <property type="project" value="TreeGrafter"/>
</dbReference>
<dbReference type="GO" id="GO:0004477">
    <property type="term" value="F:methenyltetrahydrofolate cyclohydrolase activity"/>
    <property type="evidence" value="ECO:0007669"/>
    <property type="project" value="UniProtKB-UniRule"/>
</dbReference>
<dbReference type="GO" id="GO:0004488">
    <property type="term" value="F:methylenetetrahydrofolate dehydrogenase (NADP+) activity"/>
    <property type="evidence" value="ECO:0007669"/>
    <property type="project" value="UniProtKB-UniRule"/>
</dbReference>
<dbReference type="GO" id="GO:0000105">
    <property type="term" value="P:L-histidine biosynthetic process"/>
    <property type="evidence" value="ECO:0007669"/>
    <property type="project" value="UniProtKB-KW"/>
</dbReference>
<dbReference type="GO" id="GO:0009086">
    <property type="term" value="P:methionine biosynthetic process"/>
    <property type="evidence" value="ECO:0007669"/>
    <property type="project" value="UniProtKB-KW"/>
</dbReference>
<dbReference type="GO" id="GO:0006164">
    <property type="term" value="P:purine nucleotide biosynthetic process"/>
    <property type="evidence" value="ECO:0007669"/>
    <property type="project" value="UniProtKB-KW"/>
</dbReference>
<dbReference type="GO" id="GO:0035999">
    <property type="term" value="P:tetrahydrofolate interconversion"/>
    <property type="evidence" value="ECO:0007669"/>
    <property type="project" value="UniProtKB-UniRule"/>
</dbReference>
<dbReference type="CDD" id="cd01080">
    <property type="entry name" value="NAD_bind_m-THF_DH_Cyclohyd"/>
    <property type="match status" value="1"/>
</dbReference>
<dbReference type="FunFam" id="3.40.50.10860:FF:000001">
    <property type="entry name" value="Bifunctional protein FolD"/>
    <property type="match status" value="1"/>
</dbReference>
<dbReference type="FunFam" id="3.40.50.720:FF:000094">
    <property type="entry name" value="Bifunctional protein FolD"/>
    <property type="match status" value="1"/>
</dbReference>
<dbReference type="Gene3D" id="3.40.50.10860">
    <property type="entry name" value="Leucine Dehydrogenase, chain A, domain 1"/>
    <property type="match status" value="1"/>
</dbReference>
<dbReference type="Gene3D" id="3.40.50.720">
    <property type="entry name" value="NAD(P)-binding Rossmann-like Domain"/>
    <property type="match status" value="1"/>
</dbReference>
<dbReference type="HAMAP" id="MF_01576">
    <property type="entry name" value="THF_DHG_CYH"/>
    <property type="match status" value="1"/>
</dbReference>
<dbReference type="InterPro" id="IPR046346">
    <property type="entry name" value="Aminoacid_DH-like_N_sf"/>
</dbReference>
<dbReference type="InterPro" id="IPR036291">
    <property type="entry name" value="NAD(P)-bd_dom_sf"/>
</dbReference>
<dbReference type="InterPro" id="IPR000672">
    <property type="entry name" value="THF_DH/CycHdrlase"/>
</dbReference>
<dbReference type="InterPro" id="IPR020630">
    <property type="entry name" value="THF_DH/CycHdrlase_cat_dom"/>
</dbReference>
<dbReference type="InterPro" id="IPR020867">
    <property type="entry name" value="THF_DH/CycHdrlase_CS"/>
</dbReference>
<dbReference type="InterPro" id="IPR020631">
    <property type="entry name" value="THF_DH/CycHdrlase_NAD-bd_dom"/>
</dbReference>
<dbReference type="NCBIfam" id="NF008058">
    <property type="entry name" value="PRK10792.1"/>
    <property type="match status" value="1"/>
</dbReference>
<dbReference type="NCBIfam" id="NF010776">
    <property type="entry name" value="PRK14179.1"/>
    <property type="match status" value="1"/>
</dbReference>
<dbReference type="NCBIfam" id="NF010783">
    <property type="entry name" value="PRK14186.1"/>
    <property type="match status" value="1"/>
</dbReference>
<dbReference type="PANTHER" id="PTHR48099:SF5">
    <property type="entry name" value="C-1-TETRAHYDROFOLATE SYNTHASE, CYTOPLASMIC"/>
    <property type="match status" value="1"/>
</dbReference>
<dbReference type="PANTHER" id="PTHR48099">
    <property type="entry name" value="C-1-TETRAHYDROFOLATE SYNTHASE, CYTOPLASMIC-RELATED"/>
    <property type="match status" value="1"/>
</dbReference>
<dbReference type="Pfam" id="PF00763">
    <property type="entry name" value="THF_DHG_CYH"/>
    <property type="match status" value="1"/>
</dbReference>
<dbReference type="Pfam" id="PF02882">
    <property type="entry name" value="THF_DHG_CYH_C"/>
    <property type="match status" value="1"/>
</dbReference>
<dbReference type="PRINTS" id="PR00085">
    <property type="entry name" value="THFDHDRGNASE"/>
</dbReference>
<dbReference type="SUPFAM" id="SSF53223">
    <property type="entry name" value="Aminoacid dehydrogenase-like, N-terminal domain"/>
    <property type="match status" value="1"/>
</dbReference>
<dbReference type="SUPFAM" id="SSF51735">
    <property type="entry name" value="NAD(P)-binding Rossmann-fold domains"/>
    <property type="match status" value="1"/>
</dbReference>
<dbReference type="PROSITE" id="PS00766">
    <property type="entry name" value="THF_DHG_CYH_1"/>
    <property type="match status" value="1"/>
</dbReference>
<dbReference type="PROSITE" id="PS00767">
    <property type="entry name" value="THF_DHG_CYH_2"/>
    <property type="match status" value="1"/>
</dbReference>
<protein>
    <recommendedName>
        <fullName evidence="1">Bifunctional protein FolD</fullName>
    </recommendedName>
    <domain>
        <recommendedName>
            <fullName evidence="1">Methylenetetrahydrofolate dehydrogenase</fullName>
            <ecNumber evidence="1">1.5.1.5</ecNumber>
        </recommendedName>
    </domain>
    <domain>
        <recommendedName>
            <fullName evidence="1">Methenyltetrahydrofolate cyclohydrolase</fullName>
            <ecNumber evidence="1">3.5.4.9</ecNumber>
        </recommendedName>
    </domain>
</protein>
<feature type="chain" id="PRO_0000305833" description="Bifunctional protein FolD">
    <location>
        <begin position="1"/>
        <end position="285"/>
    </location>
</feature>
<feature type="binding site" evidence="1">
    <location>
        <begin position="163"/>
        <end position="165"/>
    </location>
    <ligand>
        <name>NADP(+)</name>
        <dbReference type="ChEBI" id="CHEBI:58349"/>
    </ligand>
</feature>
<feature type="binding site" evidence="1">
    <location>
        <position position="188"/>
    </location>
    <ligand>
        <name>NADP(+)</name>
        <dbReference type="ChEBI" id="CHEBI:58349"/>
    </ligand>
</feature>
<accession>Q030A3</accession>
<name>FOLD_LACLS</name>
<keyword id="KW-0028">Amino-acid biosynthesis</keyword>
<keyword id="KW-0368">Histidine biosynthesis</keyword>
<keyword id="KW-0378">Hydrolase</keyword>
<keyword id="KW-0486">Methionine biosynthesis</keyword>
<keyword id="KW-0511">Multifunctional enzyme</keyword>
<keyword id="KW-0521">NADP</keyword>
<keyword id="KW-0554">One-carbon metabolism</keyword>
<keyword id="KW-0560">Oxidoreductase</keyword>
<keyword id="KW-0658">Purine biosynthesis</keyword>
<proteinExistence type="inferred from homology"/>
<comment type="function">
    <text evidence="1">Catalyzes the oxidation of 5,10-methylenetetrahydrofolate to 5,10-methenyltetrahydrofolate and then the hydrolysis of 5,10-methenyltetrahydrofolate to 10-formyltetrahydrofolate.</text>
</comment>
<comment type="catalytic activity">
    <reaction evidence="1">
        <text>(6R)-5,10-methylene-5,6,7,8-tetrahydrofolate + NADP(+) = (6R)-5,10-methenyltetrahydrofolate + NADPH</text>
        <dbReference type="Rhea" id="RHEA:22812"/>
        <dbReference type="ChEBI" id="CHEBI:15636"/>
        <dbReference type="ChEBI" id="CHEBI:57455"/>
        <dbReference type="ChEBI" id="CHEBI:57783"/>
        <dbReference type="ChEBI" id="CHEBI:58349"/>
        <dbReference type="EC" id="1.5.1.5"/>
    </reaction>
</comment>
<comment type="catalytic activity">
    <reaction evidence="1">
        <text>(6R)-5,10-methenyltetrahydrofolate + H2O = (6R)-10-formyltetrahydrofolate + H(+)</text>
        <dbReference type="Rhea" id="RHEA:23700"/>
        <dbReference type="ChEBI" id="CHEBI:15377"/>
        <dbReference type="ChEBI" id="CHEBI:15378"/>
        <dbReference type="ChEBI" id="CHEBI:57455"/>
        <dbReference type="ChEBI" id="CHEBI:195366"/>
        <dbReference type="EC" id="3.5.4.9"/>
    </reaction>
</comment>
<comment type="pathway">
    <text evidence="1">One-carbon metabolism; tetrahydrofolate interconversion.</text>
</comment>
<comment type="subunit">
    <text evidence="1">Homodimer.</text>
</comment>
<comment type="similarity">
    <text evidence="1">Belongs to the tetrahydrofolate dehydrogenase/cyclohydrolase family.</text>
</comment>
<comment type="sequence caution" evidence="2">
    <conflict type="erroneous initiation">
        <sequence resource="EMBL-CDS" id="ABJ72469"/>
    </conflict>
</comment>